<reference key="1">
    <citation type="journal article" date="2008" name="J. Bacteriol.">
        <title>The genome sequence of the tomato-pathogenic actinomycete Clavibacter michiganensis subsp. michiganensis NCPPB382 reveals a large island involved in pathogenicity.</title>
        <authorList>
            <person name="Gartemann K.-H."/>
            <person name="Abt B."/>
            <person name="Bekel T."/>
            <person name="Burger A."/>
            <person name="Engemann J."/>
            <person name="Fluegel M."/>
            <person name="Gaigalat L."/>
            <person name="Goesmann A."/>
            <person name="Graefen I."/>
            <person name="Kalinowski J."/>
            <person name="Kaup O."/>
            <person name="Kirchner O."/>
            <person name="Krause L."/>
            <person name="Linke B."/>
            <person name="McHardy A."/>
            <person name="Meyer F."/>
            <person name="Pohle S."/>
            <person name="Rueckert C."/>
            <person name="Schneiker S."/>
            <person name="Zellermann E.-M."/>
            <person name="Puehler A."/>
            <person name="Eichenlaub R."/>
            <person name="Kaiser O."/>
            <person name="Bartels D."/>
        </authorList>
    </citation>
    <scope>NUCLEOTIDE SEQUENCE [LARGE SCALE GENOMIC DNA]</scope>
    <source>
        <strain>NCPPB 382</strain>
    </source>
</reference>
<keyword id="KW-0687">Ribonucleoprotein</keyword>
<keyword id="KW-0689">Ribosomal protein</keyword>
<keyword id="KW-0694">RNA-binding</keyword>
<keyword id="KW-0699">rRNA-binding</keyword>
<keyword id="KW-0820">tRNA-binding</keyword>
<name>RL16_CLAM3</name>
<organism>
    <name type="scientific">Clavibacter michiganensis subsp. michiganensis (strain NCPPB 382)</name>
    <dbReference type="NCBI Taxonomy" id="443906"/>
    <lineage>
        <taxon>Bacteria</taxon>
        <taxon>Bacillati</taxon>
        <taxon>Actinomycetota</taxon>
        <taxon>Actinomycetes</taxon>
        <taxon>Micrococcales</taxon>
        <taxon>Microbacteriaceae</taxon>
        <taxon>Clavibacter</taxon>
    </lineage>
</organism>
<protein>
    <recommendedName>
        <fullName evidence="1">Large ribosomal subunit protein uL16</fullName>
    </recommendedName>
    <alternativeName>
        <fullName evidence="3">50S ribosomal protein L16</fullName>
    </alternativeName>
</protein>
<gene>
    <name evidence="1" type="primary">rplP</name>
    <name type="ordered locus">CMM_2610</name>
</gene>
<accession>A5CUA6</accession>
<dbReference type="EMBL" id="AM711867">
    <property type="protein sequence ID" value="CAN02693.1"/>
    <property type="molecule type" value="Genomic_DNA"/>
</dbReference>
<dbReference type="RefSeq" id="WP_012039299.1">
    <property type="nucleotide sequence ID" value="NC_009480.1"/>
</dbReference>
<dbReference type="SMR" id="A5CUA6"/>
<dbReference type="GeneID" id="92984322"/>
<dbReference type="KEGG" id="cmi:CMM_2610"/>
<dbReference type="eggNOG" id="COG0197">
    <property type="taxonomic scope" value="Bacteria"/>
</dbReference>
<dbReference type="HOGENOM" id="CLU_078858_2_1_11"/>
<dbReference type="OrthoDB" id="9802589at2"/>
<dbReference type="Proteomes" id="UP000001564">
    <property type="component" value="Chromosome"/>
</dbReference>
<dbReference type="GO" id="GO:0022625">
    <property type="term" value="C:cytosolic large ribosomal subunit"/>
    <property type="evidence" value="ECO:0007669"/>
    <property type="project" value="TreeGrafter"/>
</dbReference>
<dbReference type="GO" id="GO:0019843">
    <property type="term" value="F:rRNA binding"/>
    <property type="evidence" value="ECO:0007669"/>
    <property type="project" value="UniProtKB-UniRule"/>
</dbReference>
<dbReference type="GO" id="GO:0003735">
    <property type="term" value="F:structural constituent of ribosome"/>
    <property type="evidence" value="ECO:0007669"/>
    <property type="project" value="InterPro"/>
</dbReference>
<dbReference type="GO" id="GO:0000049">
    <property type="term" value="F:tRNA binding"/>
    <property type="evidence" value="ECO:0007669"/>
    <property type="project" value="UniProtKB-KW"/>
</dbReference>
<dbReference type="GO" id="GO:0006412">
    <property type="term" value="P:translation"/>
    <property type="evidence" value="ECO:0007669"/>
    <property type="project" value="UniProtKB-UniRule"/>
</dbReference>
<dbReference type="CDD" id="cd01433">
    <property type="entry name" value="Ribosomal_L16_L10e"/>
    <property type="match status" value="1"/>
</dbReference>
<dbReference type="FunFam" id="3.90.1170.10:FF:000001">
    <property type="entry name" value="50S ribosomal protein L16"/>
    <property type="match status" value="1"/>
</dbReference>
<dbReference type="Gene3D" id="3.90.1170.10">
    <property type="entry name" value="Ribosomal protein L10e/L16"/>
    <property type="match status" value="1"/>
</dbReference>
<dbReference type="HAMAP" id="MF_01342">
    <property type="entry name" value="Ribosomal_uL16"/>
    <property type="match status" value="1"/>
</dbReference>
<dbReference type="InterPro" id="IPR047873">
    <property type="entry name" value="Ribosomal_uL16"/>
</dbReference>
<dbReference type="InterPro" id="IPR000114">
    <property type="entry name" value="Ribosomal_uL16_bact-type"/>
</dbReference>
<dbReference type="InterPro" id="IPR020798">
    <property type="entry name" value="Ribosomal_uL16_CS"/>
</dbReference>
<dbReference type="InterPro" id="IPR016180">
    <property type="entry name" value="Ribosomal_uL16_dom"/>
</dbReference>
<dbReference type="InterPro" id="IPR036920">
    <property type="entry name" value="Ribosomal_uL16_sf"/>
</dbReference>
<dbReference type="NCBIfam" id="TIGR01164">
    <property type="entry name" value="rplP_bact"/>
    <property type="match status" value="1"/>
</dbReference>
<dbReference type="PANTHER" id="PTHR12220">
    <property type="entry name" value="50S/60S RIBOSOMAL PROTEIN L16"/>
    <property type="match status" value="1"/>
</dbReference>
<dbReference type="PANTHER" id="PTHR12220:SF13">
    <property type="entry name" value="LARGE RIBOSOMAL SUBUNIT PROTEIN UL16M"/>
    <property type="match status" value="1"/>
</dbReference>
<dbReference type="Pfam" id="PF00252">
    <property type="entry name" value="Ribosomal_L16"/>
    <property type="match status" value="1"/>
</dbReference>
<dbReference type="PRINTS" id="PR00060">
    <property type="entry name" value="RIBOSOMALL16"/>
</dbReference>
<dbReference type="SUPFAM" id="SSF54686">
    <property type="entry name" value="Ribosomal protein L16p/L10e"/>
    <property type="match status" value="1"/>
</dbReference>
<dbReference type="PROSITE" id="PS00701">
    <property type="entry name" value="RIBOSOMAL_L16_2"/>
    <property type="match status" value="1"/>
</dbReference>
<evidence type="ECO:0000255" key="1">
    <source>
        <dbReference type="HAMAP-Rule" id="MF_01342"/>
    </source>
</evidence>
<evidence type="ECO:0000256" key="2">
    <source>
        <dbReference type="SAM" id="MobiDB-lite"/>
    </source>
</evidence>
<evidence type="ECO:0000305" key="3"/>
<comment type="function">
    <text evidence="1">Binds 23S rRNA and is also seen to make contacts with the A and possibly P site tRNAs.</text>
</comment>
<comment type="subunit">
    <text evidence="1">Part of the 50S ribosomal subunit.</text>
</comment>
<comment type="similarity">
    <text evidence="1">Belongs to the universal ribosomal protein uL16 family.</text>
</comment>
<sequence>MLIPRKVKHRKQHHPGRTGHATGGTVVSFGEYGIQALTPAYVTNRQIESARIAMTRHVKRGGNVYINIFPDRPLTKKPAETRMGSGKGSVEWWVANVKPGRVLFELSGVDEATAREALTRAIHKLPLKARIIKREEGDA</sequence>
<feature type="chain" id="PRO_1000054604" description="Large ribosomal subunit protein uL16">
    <location>
        <begin position="1"/>
        <end position="139"/>
    </location>
</feature>
<feature type="region of interest" description="Disordered" evidence="2">
    <location>
        <begin position="1"/>
        <end position="24"/>
    </location>
</feature>
<feature type="compositionally biased region" description="Basic residues" evidence="2">
    <location>
        <begin position="1"/>
        <end position="17"/>
    </location>
</feature>
<proteinExistence type="inferred from homology"/>